<comment type="function">
    <text evidence="1">One of two assembly initiator proteins, it binds directly to the 5'-end of the 23S rRNA, where it nucleates assembly of the 50S subunit.</text>
</comment>
<comment type="function">
    <text evidence="1">One of the proteins that surrounds the polypeptide exit tunnel on the outside of the subunit.</text>
</comment>
<comment type="subunit">
    <text evidence="1">Part of the 50S ribosomal subunit.</text>
</comment>
<comment type="similarity">
    <text evidence="1">Belongs to the universal ribosomal protein uL24 family.</text>
</comment>
<keyword id="KW-0687">Ribonucleoprotein</keyword>
<keyword id="KW-0689">Ribosomal protein</keyword>
<keyword id="KW-0694">RNA-binding</keyword>
<keyword id="KW-0699">rRNA-binding</keyword>
<organism>
    <name type="scientific">Bartonella bacilliformis (strain ATCC 35685 / KC583 / Herrer 020/F12,63)</name>
    <dbReference type="NCBI Taxonomy" id="360095"/>
    <lineage>
        <taxon>Bacteria</taxon>
        <taxon>Pseudomonadati</taxon>
        <taxon>Pseudomonadota</taxon>
        <taxon>Alphaproteobacteria</taxon>
        <taxon>Hyphomicrobiales</taxon>
        <taxon>Bartonellaceae</taxon>
        <taxon>Bartonella</taxon>
    </lineage>
</organism>
<evidence type="ECO:0000255" key="1">
    <source>
        <dbReference type="HAMAP-Rule" id="MF_01326"/>
    </source>
</evidence>
<evidence type="ECO:0000305" key="2"/>
<name>RL24_BARBK</name>
<feature type="chain" id="PRO_0000355647" description="Large ribosomal subunit protein uL24">
    <location>
        <begin position="1"/>
        <end position="104"/>
    </location>
</feature>
<protein>
    <recommendedName>
        <fullName evidence="1">Large ribosomal subunit protein uL24</fullName>
    </recommendedName>
    <alternativeName>
        <fullName evidence="2">50S ribosomal protein L24</fullName>
    </alternativeName>
</protein>
<proteinExistence type="inferred from homology"/>
<accession>A1USM5</accession>
<dbReference type="EMBL" id="CP000524">
    <property type="protein sequence ID" value="ABM44702.1"/>
    <property type="molecule type" value="Genomic_DNA"/>
</dbReference>
<dbReference type="EMBL" id="CP000524">
    <property type="protein sequence ID" value="ABM44727.1"/>
    <property type="molecule type" value="Genomic_DNA"/>
</dbReference>
<dbReference type="SMR" id="A1USM5"/>
<dbReference type="STRING" id="360095.BARBAKC583_0677"/>
<dbReference type="GeneID" id="4685137"/>
<dbReference type="KEGG" id="bbk:BARBAKC583_0677"/>
<dbReference type="KEGG" id="bbk:BARBAKC583_0709"/>
<dbReference type="PATRIC" id="fig|360095.6.peg.658"/>
<dbReference type="eggNOG" id="COG0198">
    <property type="taxonomic scope" value="Bacteria"/>
</dbReference>
<dbReference type="HOGENOM" id="CLU_093315_2_2_5"/>
<dbReference type="OrthoDB" id="9807419at2"/>
<dbReference type="Proteomes" id="UP000000643">
    <property type="component" value="Chromosome"/>
</dbReference>
<dbReference type="GO" id="GO:1990904">
    <property type="term" value="C:ribonucleoprotein complex"/>
    <property type="evidence" value="ECO:0007669"/>
    <property type="project" value="UniProtKB-KW"/>
</dbReference>
<dbReference type="GO" id="GO:0005840">
    <property type="term" value="C:ribosome"/>
    <property type="evidence" value="ECO:0007669"/>
    <property type="project" value="UniProtKB-KW"/>
</dbReference>
<dbReference type="GO" id="GO:0019843">
    <property type="term" value="F:rRNA binding"/>
    <property type="evidence" value="ECO:0007669"/>
    <property type="project" value="UniProtKB-UniRule"/>
</dbReference>
<dbReference type="GO" id="GO:0003735">
    <property type="term" value="F:structural constituent of ribosome"/>
    <property type="evidence" value="ECO:0007669"/>
    <property type="project" value="InterPro"/>
</dbReference>
<dbReference type="GO" id="GO:0006412">
    <property type="term" value="P:translation"/>
    <property type="evidence" value="ECO:0007669"/>
    <property type="project" value="UniProtKB-UniRule"/>
</dbReference>
<dbReference type="CDD" id="cd06089">
    <property type="entry name" value="KOW_RPL26"/>
    <property type="match status" value="1"/>
</dbReference>
<dbReference type="FunFam" id="2.30.30.30:FF:000004">
    <property type="entry name" value="50S ribosomal protein L24"/>
    <property type="match status" value="1"/>
</dbReference>
<dbReference type="Gene3D" id="2.30.30.30">
    <property type="match status" value="1"/>
</dbReference>
<dbReference type="HAMAP" id="MF_01326_B">
    <property type="entry name" value="Ribosomal_uL24_B"/>
    <property type="match status" value="1"/>
</dbReference>
<dbReference type="InterPro" id="IPR005824">
    <property type="entry name" value="KOW"/>
</dbReference>
<dbReference type="InterPro" id="IPR014722">
    <property type="entry name" value="Rib_uL2_dom2"/>
</dbReference>
<dbReference type="InterPro" id="IPR003256">
    <property type="entry name" value="Ribosomal_uL24"/>
</dbReference>
<dbReference type="InterPro" id="IPR005825">
    <property type="entry name" value="Ribosomal_uL24_CS"/>
</dbReference>
<dbReference type="InterPro" id="IPR041988">
    <property type="entry name" value="Ribosomal_uL24_KOW"/>
</dbReference>
<dbReference type="InterPro" id="IPR008991">
    <property type="entry name" value="Translation_prot_SH3-like_sf"/>
</dbReference>
<dbReference type="NCBIfam" id="TIGR01079">
    <property type="entry name" value="rplX_bact"/>
    <property type="match status" value="1"/>
</dbReference>
<dbReference type="PANTHER" id="PTHR12903">
    <property type="entry name" value="MITOCHONDRIAL RIBOSOMAL PROTEIN L24"/>
    <property type="match status" value="1"/>
</dbReference>
<dbReference type="Pfam" id="PF00467">
    <property type="entry name" value="KOW"/>
    <property type="match status" value="1"/>
</dbReference>
<dbReference type="Pfam" id="PF17136">
    <property type="entry name" value="ribosomal_L24"/>
    <property type="match status" value="1"/>
</dbReference>
<dbReference type="SMART" id="SM00739">
    <property type="entry name" value="KOW"/>
    <property type="match status" value="1"/>
</dbReference>
<dbReference type="SUPFAM" id="SSF50104">
    <property type="entry name" value="Translation proteins SH3-like domain"/>
    <property type="match status" value="1"/>
</dbReference>
<dbReference type="PROSITE" id="PS01108">
    <property type="entry name" value="RIBOSOMAL_L24"/>
    <property type="match status" value="1"/>
</dbReference>
<sequence length="104" mass="11357">MKKIRKGDRVVILSGNDKGRSGEVIKVNPGESKALVRGINMVKRHQRQTQKQEAGIISKEAPIHLSNLAIADPKDGKPTRVGFRMNADGGKVRFAKRSGELIDG</sequence>
<reference key="1">
    <citation type="submission" date="2006-12" db="EMBL/GenBank/DDBJ databases">
        <authorList>
            <person name="Hendrix L."/>
            <person name="Mohamoud Y."/>
            <person name="Radune D."/>
            <person name="Shvartsbeyn A."/>
            <person name="Daugherty S."/>
            <person name="Dodson R."/>
            <person name="Durkin A.S."/>
            <person name="Harkins D."/>
            <person name="Huot H."/>
            <person name="Kothari S.P."/>
            <person name="Madupu R."/>
            <person name="Li J."/>
            <person name="Nelson W.C."/>
            <person name="Shrivastava S."/>
            <person name="Giglio M.G."/>
            <person name="Haft D."/>
            <person name="Selengut J."/>
            <person name="Fraser-Ligget C."/>
            <person name="Seshadri R."/>
        </authorList>
    </citation>
    <scope>NUCLEOTIDE SEQUENCE [LARGE SCALE GENOMIC DNA]</scope>
    <source>
        <strain>ATCC 35685 / KC583 / Herrer 020/F12,63</strain>
    </source>
</reference>
<gene>
    <name evidence="1" type="primary">rplX1</name>
    <name type="ordered locus">BARBAKC583_0677</name>
</gene>
<gene>
    <name evidence="1" type="primary">rplX2</name>
    <name type="ordered locus">BARBAKC583_0709</name>
</gene>